<sequence length="720" mass="80616">MAAPVGLVKFWRPGTEGPGVSISEERQSLAENSGTTVVYNPYAALSIEQQRQKLPVFKLRNHILYLIENYQTVVIVGETGCGKSTQIPQYLAEAGWTAEGRVVGVTQPRRVAAVTVAGRVAEERGAVLGHEVGYCIRFDDCTDQLATRIKFLTDGMLVREMMVDPLLTKYSVIMLDEAHERTLYTDIAIGLLKKIQKKRGDLRLIVASATLDADKFRDFFNQNETSDPARDTCVILTVGGRTFPVDIFYLQSPVPDYIKSTVETVVKIHQTEGDGDILAFLTGQEEVETVVSMLIEQARALARTGMKRHLRVLPMYAGLPSFEQMKVFERVSRSVRKVIVATNVAETSITISGIVYVIDCGFVKLRAYNPRTAIECLVVVPVSQASANQRAGRGGRSRSGKCYRLYTEEAFDKLPQSTVPEMQRSNLAPVILQLKALGIDNVLRFHFMSPPPAQSMVQALELLYALGGLDKDCRLTEPLGMRIAEFPLNPMFAKMLLESGNFGCSQEILSIAAMMQIQNIFVVPPNQKSQAIRVHRKFAVEEGDHLTMLNVYEAFIKHNKNSQWCQEHFLNYKGLVRAATVREQLKKLLVKFQVPKKSSEGDPDPVLRCIVSGFFANAARFHSTGAYRTIRDDHELHIHPASVLYAEKPPRWVIYNEVIQTSKYYMRDVTAIESAWLLELAPHFYQQGTQACTLHVGRGRVFISILEHGYLACRDACTCL</sequence>
<keyword id="KW-0067">ATP-binding</keyword>
<keyword id="KW-0347">Helicase</keyword>
<keyword id="KW-0378">Hydrolase</keyword>
<keyword id="KW-0507">mRNA processing</keyword>
<keyword id="KW-0508">mRNA splicing</keyword>
<keyword id="KW-0547">Nucleotide-binding</keyword>
<keyword id="KW-1185">Reference proteome</keyword>
<keyword id="KW-0747">Spliceosome</keyword>
<accession>Q5RBD4</accession>
<feature type="chain" id="PRO_0000055169" description="Probable ATP-dependent RNA helicase DHX35">
    <location>
        <begin position="1"/>
        <end position="720"/>
    </location>
</feature>
<feature type="domain" description="Helicase ATP-binding" evidence="2">
    <location>
        <begin position="64"/>
        <end position="229"/>
    </location>
</feature>
<feature type="domain" description="Helicase C-terminal" evidence="3">
    <location>
        <begin position="261"/>
        <end position="438"/>
    </location>
</feature>
<feature type="short sequence motif" description="DEAH box">
    <location>
        <begin position="176"/>
        <end position="179"/>
    </location>
</feature>
<feature type="binding site" evidence="2">
    <location>
        <begin position="77"/>
        <end position="84"/>
    </location>
    <ligand>
        <name>ATP</name>
        <dbReference type="ChEBI" id="CHEBI:30616"/>
    </ligand>
</feature>
<comment type="function">
    <text evidence="1">May be involved in pre-mRNA splicing.</text>
</comment>
<comment type="catalytic activity">
    <reaction>
        <text>ATP + H2O = ADP + phosphate + H(+)</text>
        <dbReference type="Rhea" id="RHEA:13065"/>
        <dbReference type="ChEBI" id="CHEBI:15377"/>
        <dbReference type="ChEBI" id="CHEBI:15378"/>
        <dbReference type="ChEBI" id="CHEBI:30616"/>
        <dbReference type="ChEBI" id="CHEBI:43474"/>
        <dbReference type="ChEBI" id="CHEBI:456216"/>
        <dbReference type="EC" id="3.6.4.13"/>
    </reaction>
</comment>
<comment type="subunit">
    <text evidence="1">Identified in the spliceosome C complex.</text>
</comment>
<comment type="similarity">
    <text evidence="4">Belongs to the DEAD box helicase family. DEAH subfamily.</text>
</comment>
<gene>
    <name type="primary">DHX35</name>
</gene>
<protein>
    <recommendedName>
        <fullName>Probable ATP-dependent RNA helicase DHX35</fullName>
        <ecNumber>3.6.4.13</ecNumber>
    </recommendedName>
    <alternativeName>
        <fullName>DEAH box protein 35</fullName>
    </alternativeName>
</protein>
<evidence type="ECO:0000250" key="1"/>
<evidence type="ECO:0000255" key="2">
    <source>
        <dbReference type="PROSITE-ProRule" id="PRU00541"/>
    </source>
</evidence>
<evidence type="ECO:0000255" key="3">
    <source>
        <dbReference type="PROSITE-ProRule" id="PRU00542"/>
    </source>
</evidence>
<evidence type="ECO:0000305" key="4"/>
<dbReference type="EC" id="3.6.4.13"/>
<dbReference type="EMBL" id="CR858717">
    <property type="protein sequence ID" value="CAH90926.1"/>
    <property type="molecule type" value="mRNA"/>
</dbReference>
<dbReference type="RefSeq" id="NP_001125530.1">
    <property type="nucleotide sequence ID" value="NM_001132058.1"/>
</dbReference>
<dbReference type="SMR" id="Q5RBD4"/>
<dbReference type="STRING" id="9601.ENSPPYP00000012292"/>
<dbReference type="Ensembl" id="ENSPPYT00000012773.3">
    <property type="protein sequence ID" value="ENSPPYP00000012292.3"/>
    <property type="gene ID" value="ENSPPYG00000011007.3"/>
</dbReference>
<dbReference type="GeneID" id="100172442"/>
<dbReference type="KEGG" id="pon:100172442"/>
<dbReference type="CTD" id="60625"/>
<dbReference type="eggNOG" id="KOG0922">
    <property type="taxonomic scope" value="Eukaryota"/>
</dbReference>
<dbReference type="GeneTree" id="ENSGT00940000156142"/>
<dbReference type="InParanoid" id="Q5RBD4"/>
<dbReference type="OMA" id="FHEVMET"/>
<dbReference type="OrthoDB" id="10253254at2759"/>
<dbReference type="Proteomes" id="UP000001595">
    <property type="component" value="Chromosome 20"/>
</dbReference>
<dbReference type="GO" id="GO:0071013">
    <property type="term" value="C:catalytic step 2 spliceosome"/>
    <property type="evidence" value="ECO:0007669"/>
    <property type="project" value="Ensembl"/>
</dbReference>
<dbReference type="GO" id="GO:0005524">
    <property type="term" value="F:ATP binding"/>
    <property type="evidence" value="ECO:0007669"/>
    <property type="project" value="UniProtKB-KW"/>
</dbReference>
<dbReference type="GO" id="GO:0016887">
    <property type="term" value="F:ATP hydrolysis activity"/>
    <property type="evidence" value="ECO:0007669"/>
    <property type="project" value="RHEA"/>
</dbReference>
<dbReference type="GO" id="GO:0003723">
    <property type="term" value="F:RNA binding"/>
    <property type="evidence" value="ECO:0007669"/>
    <property type="project" value="TreeGrafter"/>
</dbReference>
<dbReference type="GO" id="GO:0003724">
    <property type="term" value="F:RNA helicase activity"/>
    <property type="evidence" value="ECO:0007669"/>
    <property type="project" value="UniProtKB-EC"/>
</dbReference>
<dbReference type="GO" id="GO:0001701">
    <property type="term" value="P:in utero embryonic development"/>
    <property type="evidence" value="ECO:0007669"/>
    <property type="project" value="Ensembl"/>
</dbReference>
<dbReference type="GO" id="GO:0006397">
    <property type="term" value="P:mRNA processing"/>
    <property type="evidence" value="ECO:0007669"/>
    <property type="project" value="UniProtKB-KW"/>
</dbReference>
<dbReference type="GO" id="GO:0008380">
    <property type="term" value="P:RNA splicing"/>
    <property type="evidence" value="ECO:0007669"/>
    <property type="project" value="UniProtKB-KW"/>
</dbReference>
<dbReference type="CDD" id="cd17980">
    <property type="entry name" value="DEXHc_DHX35"/>
    <property type="match status" value="1"/>
</dbReference>
<dbReference type="CDD" id="cd18791">
    <property type="entry name" value="SF2_C_RHA"/>
    <property type="match status" value="1"/>
</dbReference>
<dbReference type="FunFam" id="3.40.50.300:FF:000007">
    <property type="entry name" value="Pre-mRNA-splicing factor ATP-dependent RNA helicase"/>
    <property type="match status" value="1"/>
</dbReference>
<dbReference type="FunFam" id="1.20.120.1080:FF:000007">
    <property type="entry name" value="Probable ATP-dependent RNA helicase DHX35"/>
    <property type="match status" value="1"/>
</dbReference>
<dbReference type="FunFam" id="3.40.50.300:FF:000578">
    <property type="entry name" value="probable ATP-dependent RNA helicase DHX35"/>
    <property type="match status" value="1"/>
</dbReference>
<dbReference type="Gene3D" id="1.20.120.1080">
    <property type="match status" value="1"/>
</dbReference>
<dbReference type="Gene3D" id="3.40.50.300">
    <property type="entry name" value="P-loop containing nucleotide triphosphate hydrolases"/>
    <property type="match status" value="2"/>
</dbReference>
<dbReference type="InterPro" id="IPR011709">
    <property type="entry name" value="DEAD-box_helicase_OB_fold"/>
</dbReference>
<dbReference type="InterPro" id="IPR002464">
    <property type="entry name" value="DNA/RNA_helicase_DEAH_CS"/>
</dbReference>
<dbReference type="InterPro" id="IPR048333">
    <property type="entry name" value="HA2_WH"/>
</dbReference>
<dbReference type="InterPro" id="IPR007502">
    <property type="entry name" value="Helicase-assoc_dom"/>
</dbReference>
<dbReference type="InterPro" id="IPR014001">
    <property type="entry name" value="Helicase_ATP-bd"/>
</dbReference>
<dbReference type="InterPro" id="IPR001650">
    <property type="entry name" value="Helicase_C-like"/>
</dbReference>
<dbReference type="InterPro" id="IPR027417">
    <property type="entry name" value="P-loop_NTPase"/>
</dbReference>
<dbReference type="PANTHER" id="PTHR18934">
    <property type="entry name" value="ATP-DEPENDENT RNA HELICASE"/>
    <property type="match status" value="1"/>
</dbReference>
<dbReference type="PANTHER" id="PTHR18934:SF136">
    <property type="entry name" value="ATP-DEPENDENT RNA HELICASE DHX35-RELATED"/>
    <property type="match status" value="1"/>
</dbReference>
<dbReference type="Pfam" id="PF21010">
    <property type="entry name" value="HA2_C"/>
    <property type="match status" value="1"/>
</dbReference>
<dbReference type="Pfam" id="PF04408">
    <property type="entry name" value="HA2_N"/>
    <property type="match status" value="1"/>
</dbReference>
<dbReference type="Pfam" id="PF00271">
    <property type="entry name" value="Helicase_C"/>
    <property type="match status" value="1"/>
</dbReference>
<dbReference type="Pfam" id="PF07717">
    <property type="entry name" value="OB_NTP_bind"/>
    <property type="match status" value="1"/>
</dbReference>
<dbReference type="SMART" id="SM00487">
    <property type="entry name" value="DEXDc"/>
    <property type="match status" value="1"/>
</dbReference>
<dbReference type="SMART" id="SM00847">
    <property type="entry name" value="HA2"/>
    <property type="match status" value="1"/>
</dbReference>
<dbReference type="SMART" id="SM00490">
    <property type="entry name" value="HELICc"/>
    <property type="match status" value="1"/>
</dbReference>
<dbReference type="SUPFAM" id="SSF52540">
    <property type="entry name" value="P-loop containing nucleoside triphosphate hydrolases"/>
    <property type="match status" value="1"/>
</dbReference>
<dbReference type="PROSITE" id="PS00690">
    <property type="entry name" value="DEAH_ATP_HELICASE"/>
    <property type="match status" value="1"/>
</dbReference>
<dbReference type="PROSITE" id="PS51192">
    <property type="entry name" value="HELICASE_ATP_BIND_1"/>
    <property type="match status" value="1"/>
</dbReference>
<dbReference type="PROSITE" id="PS51194">
    <property type="entry name" value="HELICASE_CTER"/>
    <property type="match status" value="1"/>
</dbReference>
<organism>
    <name type="scientific">Pongo abelii</name>
    <name type="common">Sumatran orangutan</name>
    <name type="synonym">Pongo pygmaeus abelii</name>
    <dbReference type="NCBI Taxonomy" id="9601"/>
    <lineage>
        <taxon>Eukaryota</taxon>
        <taxon>Metazoa</taxon>
        <taxon>Chordata</taxon>
        <taxon>Craniata</taxon>
        <taxon>Vertebrata</taxon>
        <taxon>Euteleostomi</taxon>
        <taxon>Mammalia</taxon>
        <taxon>Eutheria</taxon>
        <taxon>Euarchontoglires</taxon>
        <taxon>Primates</taxon>
        <taxon>Haplorrhini</taxon>
        <taxon>Catarrhini</taxon>
        <taxon>Hominidae</taxon>
        <taxon>Pongo</taxon>
    </lineage>
</organism>
<name>DHX35_PONAB</name>
<proteinExistence type="evidence at transcript level"/>
<reference key="1">
    <citation type="submission" date="2004-11" db="EMBL/GenBank/DDBJ databases">
        <authorList>
            <consortium name="The German cDNA consortium"/>
        </authorList>
    </citation>
    <scope>NUCLEOTIDE SEQUENCE [LARGE SCALE MRNA]</scope>
    <source>
        <tissue>Heart</tissue>
    </source>
</reference>